<sequence length="421" mass="48651">MDRVLSRADKERLLELLKLPRQLWGDFGRMQQAYKQQSLLLHPDKGGSHALMQELNSLWGTFKTEVYNLRMNLGGTGFQVRRLHADGWNLSTKDTFGDRYYQRFCRMPLTCLVNVKYSSCSCILCLLRKQHRELKDKCDARCLVLGECFCLECYMQWFGTPTRDVLNLYADFIASMPIDWLDLDVHSVYNPRTRSEELRRAATVHYTMTTGHSAMEASTSQGNGMISSESGTPAISRRLRLPSLLSNPTYSVMRSHSFPPTRVLQQIHPHILLEDDETLVLLSPMTAYPRTPPELLYPESDQDQLEPLEEEEEEYMPMEDLYLDILPEEQVPQLIPPPIIPRAGLSPWEGLILRDLQRAHFDPILEASQRMRATHRAALRAHSMQRHLRRLGRTLLLVTFLAALLGICLMLFILIKRSRHF</sequence>
<organismHost>
    <name type="scientific">Mus musculus</name>
    <name type="common">Mouse</name>
    <dbReference type="NCBI Taxonomy" id="10090"/>
</organismHost>
<reference key="1">
    <citation type="journal article" date="1983" name="J. Virol.">
        <title>Comparison of the DNA sequence of the Crawford small-plaque variant of polyomavirus with those of polyomaviruses A2 and strain 3.</title>
        <authorList>
            <person name="Rothwell V.M."/>
            <person name="Folk W.R."/>
        </authorList>
    </citation>
    <scope>NUCLEOTIDE SEQUENCE [GENOMIC DNA]</scope>
</reference>
<reference key="2">
    <citation type="submission" date="1985-11" db="EMBL/GenBank/DDBJ databases">
        <authorList>
            <person name="Rothwell V.M."/>
        </authorList>
    </citation>
    <scope>SEQUENCE REVISION</scope>
</reference>
<feature type="chain" id="PRO_0000115050" description="Middle T antigen">
    <location>
        <begin position="1"/>
        <end position="421"/>
    </location>
</feature>
<feature type="topological domain" description="Cytoplasmic" evidence="2">
    <location>
        <begin position="1"/>
        <end position="394"/>
    </location>
</feature>
<feature type="transmembrane region" description="Helical" evidence="2">
    <location>
        <begin position="395"/>
        <end position="415"/>
    </location>
</feature>
<feature type="topological domain" description="Extracellular" evidence="2">
    <location>
        <begin position="416"/>
        <end position="421"/>
    </location>
</feature>
<feature type="domain" description="J">
    <location>
        <begin position="12"/>
        <end position="75"/>
    </location>
</feature>
<feature type="modified residue" description="Phosphotyrosine; by host" evidence="1">
    <location>
        <position position="250"/>
    </location>
</feature>
<feature type="modified residue" description="Phosphoserine; by host" evidence="1">
    <location>
        <position position="257"/>
    </location>
</feature>
<feature type="modified residue" description="Phosphotyrosine; by host" evidence="1">
    <location>
        <position position="315"/>
    </location>
</feature>
<feature type="modified residue" description="Phosphotyrosine; by host" evidence="1">
    <location>
        <position position="322"/>
    </location>
</feature>
<protein>
    <recommendedName>
        <fullName>Middle T antigen</fullName>
        <shortName>MT</shortName>
        <shortName>MT-AG</shortName>
    </recommendedName>
</protein>
<accession>P12906</accession>
<dbReference type="EMBL" id="K02737">
    <property type="status" value="NOT_ANNOTATED_CDS"/>
    <property type="molecule type" value="Genomic_DNA"/>
</dbReference>
<dbReference type="PIR" id="B28838">
    <property type="entry name" value="TVVPMP"/>
</dbReference>
<dbReference type="SMR" id="P12906"/>
<dbReference type="iPTMnet" id="P12906"/>
<dbReference type="Proteomes" id="UP000008480">
    <property type="component" value="Segment"/>
</dbReference>
<dbReference type="GO" id="GO:0033644">
    <property type="term" value="C:host cell membrane"/>
    <property type="evidence" value="ECO:0007669"/>
    <property type="project" value="UniProtKB-SubCell"/>
</dbReference>
<dbReference type="GO" id="GO:0016020">
    <property type="term" value="C:membrane"/>
    <property type="evidence" value="ECO:0007669"/>
    <property type="project" value="UniProtKB-KW"/>
</dbReference>
<dbReference type="Gene3D" id="1.10.287.110">
    <property type="entry name" value="DnaJ domain"/>
    <property type="match status" value="1"/>
</dbReference>
<dbReference type="Gene3D" id="1.20.120.1860">
    <property type="entry name" value="Small t-antigen, unique domain"/>
    <property type="match status" value="1"/>
</dbReference>
<dbReference type="InterPro" id="IPR001623">
    <property type="entry name" value="DnaJ_domain"/>
</dbReference>
<dbReference type="InterPro" id="IPR036869">
    <property type="entry name" value="J_dom_sf"/>
</dbReference>
<dbReference type="InterPro" id="IPR003354">
    <property type="entry name" value="Papo_T_antigen"/>
</dbReference>
<dbReference type="InterPro" id="IPR036092">
    <property type="entry name" value="Papo_T_antigensf"/>
</dbReference>
<dbReference type="Pfam" id="PF02380">
    <property type="entry name" value="Papo_T_antigen"/>
    <property type="match status" value="1"/>
</dbReference>
<dbReference type="SMART" id="SM00271">
    <property type="entry name" value="DnaJ"/>
    <property type="match status" value="1"/>
</dbReference>
<dbReference type="SUPFAM" id="SSF46565">
    <property type="entry name" value="Chaperone J-domain"/>
    <property type="match status" value="1"/>
</dbReference>
<dbReference type="SUPFAM" id="SSF161240">
    <property type="entry name" value="T-antigen specific domain-like"/>
    <property type="match status" value="1"/>
</dbReference>
<name>MT_POVMC</name>
<comment type="function">
    <text>Plays a role in transformation by modulating the activities of cellular proteins involved in control of cell proliferation and by acting as a functional homolog of an activated tyrosine kinase-associated growth-factor receptor. Recruits upon association with host Ppp2/PP2A the Src tyrosine kinase components Src, Yes and Fyn, thereby activating their kinase activity. Activation of Shc1, Pclg1 and p85 mediate signal transduction pathways leading to cell cycle progression and cell division. MT also plays a role in regulation of early and late gene expression and in viral DNA replication.</text>
</comment>
<comment type="subunit">
    <text>Interacts with host Ppp2/PP2A A and C subunits; this interaction alters Ppp2/PP2A substrate specificity and localization. Interacts with host Src, Yes1, and Fyn. Interacts with host Shc1, Plcg1 and p85; these interactions lead to cell cycle progression. Interacts with host 14-3-3 proteins.</text>
</comment>
<comment type="subcellular location">
    <subcellularLocation>
        <location evidence="3">Host membrane</location>
        <topology evidence="3">Single-pass membrane protein</topology>
    </subcellularLocation>
</comment>
<comment type="alternative products">
    <event type="alternative splicing"/>
    <isoform>
        <id>P12906-1</id>
        <name>Middle T antigen</name>
        <sequence type="displayed"/>
    </isoform>
    <isoform>
        <id>P0C567-1</id>
        <name>Small t antigen</name>
        <sequence type="external"/>
    </isoform>
    <isoform>
        <id>P12905-1</id>
        <name>Large T antigen</name>
        <sequence type="external"/>
    </isoform>
</comment>
<comment type="domain">
    <text>The NPTY motif is required for interaction with host Shc1 protein.</text>
</comment>
<comment type="PTM">
    <text>Tyrosine-phosphorylated on three residues 250, 315 and 322, providing docking sites for host Shc1, p85, and Plcg1, respectively.</text>
</comment>
<evidence type="ECO:0000250" key="1"/>
<evidence type="ECO:0000255" key="2"/>
<evidence type="ECO:0000305" key="3"/>
<proteinExistence type="inferred from homology"/>
<keyword id="KW-0025">Alternative splicing</keyword>
<keyword id="KW-0244">Early protein</keyword>
<keyword id="KW-1043">Host membrane</keyword>
<keyword id="KW-0945">Host-virus interaction</keyword>
<keyword id="KW-0472">Membrane</keyword>
<keyword id="KW-0553">Oncogene</keyword>
<keyword id="KW-0597">Phosphoprotein</keyword>
<keyword id="KW-0812">Transmembrane</keyword>
<keyword id="KW-1133">Transmembrane helix</keyword>
<organism>
    <name type="scientific">Murine polyomavirus (strain Crawford small-plaque)</name>
    <name type="common">MPyV</name>
    <dbReference type="NCBI Taxonomy" id="10637"/>
    <lineage>
        <taxon>Viruses</taxon>
        <taxon>Monodnaviria</taxon>
        <taxon>Shotokuvirae</taxon>
        <taxon>Cossaviricota</taxon>
        <taxon>Papovaviricetes</taxon>
        <taxon>Sepolyvirales</taxon>
        <taxon>Polyomaviridae</taxon>
        <taxon>Alphapolyomavirus</taxon>
        <taxon>Mus musculus polyomavirus 1</taxon>
    </lineage>
</organism>